<proteinExistence type="inferred from homology"/>
<comment type="function">
    <text evidence="1">Involved in resistance to arsenate. Catalyzes the reduction of arsenate [As(V)] to arsenite [As(III)].</text>
</comment>
<comment type="catalytic activity">
    <reaction evidence="1">
        <text>[glutaredoxin]-dithiol + arsenate + glutathione + H(+) = glutathionyl-S-S-[glutaredoxin] + arsenite + H2O</text>
        <dbReference type="Rhea" id="RHEA:22016"/>
        <dbReference type="Rhea" id="RHEA-COMP:10729"/>
        <dbReference type="Rhea" id="RHEA-COMP:17668"/>
        <dbReference type="ChEBI" id="CHEBI:15377"/>
        <dbReference type="ChEBI" id="CHEBI:15378"/>
        <dbReference type="ChEBI" id="CHEBI:29242"/>
        <dbReference type="ChEBI" id="CHEBI:29950"/>
        <dbReference type="ChEBI" id="CHEBI:48597"/>
        <dbReference type="ChEBI" id="CHEBI:57925"/>
        <dbReference type="ChEBI" id="CHEBI:146199"/>
        <dbReference type="EC" id="1.20.4.1"/>
    </reaction>
</comment>
<comment type="similarity">
    <text evidence="3">Belongs to the ArsC family.</text>
</comment>
<gene>
    <name type="primary">arsC</name>
</gene>
<reference key="1">
    <citation type="journal article" date="2000" name="DNA Res.">
        <title>Genomic, transcriptional and phenotypic analysis of ftsE and ftsX of Neisseria gonorrhoeae.</title>
        <authorList>
            <person name="Bernatchez S."/>
            <person name="Francis F.M."/>
            <person name="Salimnia H."/>
            <person name="Beveridge T.J."/>
            <person name="Li H."/>
            <person name="Dillon J.-A.R."/>
        </authorList>
    </citation>
    <scope>NUCLEOTIDE SEQUENCE [GENOMIC DNA]</scope>
    <source>
        <strain>CH811</strain>
    </source>
</reference>
<name>ARSC_NEIGO</name>
<feature type="chain" id="PRO_0000162540" description="Putative arsenate reductase">
    <location>
        <begin position="1"/>
        <end position="102"/>
    </location>
</feature>
<feature type="active site" description="Nucleophile; cysteine thioarsenate intermediate" evidence="1 2">
    <location>
        <position position="12"/>
    </location>
</feature>
<feature type="site" description="Important for activity" evidence="1">
    <location>
        <position position="8"/>
    </location>
</feature>
<feature type="site" description="Important for activity" evidence="1">
    <location>
        <position position="61"/>
    </location>
</feature>
<feature type="site" description="Important for activity" evidence="1">
    <location>
        <position position="95"/>
    </location>
</feature>
<sequence length="102" mass="11413">MSEIKIFHNPRCSKSRAAVSLLEERGIAAEAVKYLDTPPDLSELKDIFNKLGLESARGMMRVKDDLYKELGLDNPDLDNDALLRAIADHPALLERPIVLGKR</sequence>
<keyword id="KW-0059">Arsenical resistance</keyword>
<keyword id="KW-0560">Oxidoreductase</keyword>
<organism>
    <name type="scientific">Neisseria gonorrhoeae</name>
    <dbReference type="NCBI Taxonomy" id="485"/>
    <lineage>
        <taxon>Bacteria</taxon>
        <taxon>Pseudomonadati</taxon>
        <taxon>Pseudomonadota</taxon>
        <taxon>Betaproteobacteria</taxon>
        <taxon>Neisseriales</taxon>
        <taxon>Neisseriaceae</taxon>
        <taxon>Neisseria</taxon>
    </lineage>
</organism>
<dbReference type="EC" id="1.20.4.1" evidence="1"/>
<dbReference type="EMBL" id="U76418">
    <property type="protein sequence ID" value="AAB36522.1"/>
    <property type="molecule type" value="Genomic_DNA"/>
</dbReference>
<dbReference type="SMR" id="P95354"/>
<dbReference type="GO" id="GO:0008794">
    <property type="term" value="F:arsenate reductase (glutaredoxin) activity"/>
    <property type="evidence" value="ECO:0007669"/>
    <property type="project" value="UniProtKB-EC"/>
</dbReference>
<dbReference type="GO" id="GO:0046685">
    <property type="term" value="P:response to arsenic-containing substance"/>
    <property type="evidence" value="ECO:0007669"/>
    <property type="project" value="UniProtKB-KW"/>
</dbReference>
<dbReference type="CDD" id="cd03034">
    <property type="entry name" value="ArsC_ArsC"/>
    <property type="match status" value="1"/>
</dbReference>
<dbReference type="Gene3D" id="3.40.30.10">
    <property type="entry name" value="Glutaredoxin"/>
    <property type="match status" value="1"/>
</dbReference>
<dbReference type="InterPro" id="IPR006659">
    <property type="entry name" value="Arsenate_reductase"/>
</dbReference>
<dbReference type="InterPro" id="IPR006660">
    <property type="entry name" value="Arsenate_reductase-like"/>
</dbReference>
<dbReference type="InterPro" id="IPR036249">
    <property type="entry name" value="Thioredoxin-like_sf"/>
</dbReference>
<dbReference type="NCBIfam" id="TIGR00014">
    <property type="entry name" value="arsC"/>
    <property type="match status" value="1"/>
</dbReference>
<dbReference type="PANTHER" id="PTHR30041">
    <property type="entry name" value="ARSENATE REDUCTASE"/>
    <property type="match status" value="1"/>
</dbReference>
<dbReference type="PANTHER" id="PTHR30041:SF4">
    <property type="entry name" value="ARSENATE REDUCTASE"/>
    <property type="match status" value="1"/>
</dbReference>
<dbReference type="Pfam" id="PF03960">
    <property type="entry name" value="ArsC"/>
    <property type="match status" value="1"/>
</dbReference>
<dbReference type="SUPFAM" id="SSF52833">
    <property type="entry name" value="Thioredoxin-like"/>
    <property type="match status" value="1"/>
</dbReference>
<dbReference type="PROSITE" id="PS51353">
    <property type="entry name" value="ARSC"/>
    <property type="match status" value="1"/>
</dbReference>
<accession>P95354</accession>
<protein>
    <recommendedName>
        <fullName>Putative arsenate reductase</fullName>
        <ecNumber evidence="1">1.20.4.1</ecNumber>
    </recommendedName>
</protein>
<evidence type="ECO:0000250" key="1">
    <source>
        <dbReference type="UniProtKB" id="P08692"/>
    </source>
</evidence>
<evidence type="ECO:0000255" key="2">
    <source>
        <dbReference type="PROSITE-ProRule" id="PRU01282"/>
    </source>
</evidence>
<evidence type="ECO:0000305" key="3"/>